<sequence>MSKQNTYRLINPYIEGTTDTVVHSSNSFKAGKKLYGGISGYFTNHLDNFHMTIQNVQTGGLTHFRILEQRKNDGTVDYKLEKIDGEFSPDVDNKLLSSVAKLEQQKGGGSNDSSDSSDSETECFKFPLQPINRFVYFYLPYHKLNLVGLSPVDISRIFMPTFGFPFNPTIEIRFDLYKY</sequence>
<feature type="chain" id="PRO_0000253273" description="Uncharacterized protein L492">
    <location>
        <begin position="1"/>
        <end position="179"/>
    </location>
</feature>
<dbReference type="EMBL" id="AY653733">
    <property type="protein sequence ID" value="AAV50758.1"/>
    <property type="molecule type" value="Genomic_DNA"/>
</dbReference>
<dbReference type="KEGG" id="vg:9925122"/>
<dbReference type="OrthoDB" id="15517at10239"/>
<dbReference type="Proteomes" id="UP000001134">
    <property type="component" value="Genome"/>
</dbReference>
<dbReference type="GO" id="GO:0044423">
    <property type="term" value="C:virion component"/>
    <property type="evidence" value="ECO:0007669"/>
    <property type="project" value="UniProtKB-KW"/>
</dbReference>
<name>YL492_MIMIV</name>
<evidence type="ECO:0000269" key="1">
    <source>
    </source>
</evidence>
<keyword id="KW-1185">Reference proteome</keyword>
<keyword id="KW-0946">Virion</keyword>
<reference key="1">
    <citation type="journal article" date="2004" name="Science">
        <title>The 1.2-megabase genome sequence of Mimivirus.</title>
        <authorList>
            <person name="Raoult D."/>
            <person name="Audic S."/>
            <person name="Robert C."/>
            <person name="Abergel C."/>
            <person name="Renesto P."/>
            <person name="Ogata H."/>
            <person name="La Scola B."/>
            <person name="Susan M."/>
            <person name="Claverie J.-M."/>
        </authorList>
    </citation>
    <scope>NUCLEOTIDE SEQUENCE [LARGE SCALE GENOMIC DNA]</scope>
    <source>
        <strain>Rowbotham-Bradford</strain>
    </source>
</reference>
<reference key="2">
    <citation type="journal article" date="2006" name="J. Virol.">
        <title>Mimivirus giant particles incorporate a large fraction of anonymous and unique gene products.</title>
        <authorList>
            <person name="Renesto P."/>
            <person name="Abergel C."/>
            <person name="Decloquement P."/>
            <person name="Moinier D."/>
            <person name="Azza S."/>
            <person name="Ogata H."/>
            <person name="Fourquet P."/>
            <person name="Gorvel J.-P."/>
            <person name="Claverie J.-M."/>
            <person name="Raoult D."/>
        </authorList>
    </citation>
    <scope>IDENTIFICATION BY MASS SPECTROMETRY [LARGE SCALE ANALYSIS]</scope>
    <scope>SUBCELLULAR LOCATION</scope>
</reference>
<protein>
    <recommendedName>
        <fullName>Uncharacterized protein L492</fullName>
    </recommendedName>
</protein>
<gene>
    <name type="ordered locus">MIMI_L492</name>
</gene>
<proteinExistence type="evidence at protein level"/>
<accession>Q5UQG1</accession>
<comment type="subcellular location">
    <subcellularLocation>
        <location evidence="1">Virion</location>
    </subcellularLocation>
</comment>
<organismHost>
    <name type="scientific">Acanthamoeba polyphaga</name>
    <name type="common">Amoeba</name>
    <dbReference type="NCBI Taxonomy" id="5757"/>
</organismHost>
<organism>
    <name type="scientific">Acanthamoeba polyphaga mimivirus</name>
    <name type="common">APMV</name>
    <dbReference type="NCBI Taxonomy" id="212035"/>
    <lineage>
        <taxon>Viruses</taxon>
        <taxon>Varidnaviria</taxon>
        <taxon>Bamfordvirae</taxon>
        <taxon>Nucleocytoviricota</taxon>
        <taxon>Megaviricetes</taxon>
        <taxon>Imitervirales</taxon>
        <taxon>Mimiviridae</taxon>
        <taxon>Megamimivirinae</taxon>
        <taxon>Mimivirus</taxon>
        <taxon>Mimivirus bradfordmassiliense</taxon>
    </lineage>
</organism>